<accession>Q5HZ38</accession>
<accession>Q8LPG6</accession>
<accession>Q9FKJ2</accession>
<comment type="function">
    <text evidence="5 6 7 8">Activates SnRK1.1/KIN10 and SnRK1.2/KIN11 by phosphorylation of their activation-loop 'Thr-198' and 'Thr-176', respectively. Required for the regulation by SnRK1 kinases of the transcription of a large set of genes, the modification the activity of metabolic enzymes, and the control of various nutrient-responsive cellular developmental processes.</text>
</comment>
<comment type="catalytic activity">
    <reaction>
        <text>L-seryl-[protein] + ATP = O-phospho-L-seryl-[protein] + ADP + H(+)</text>
        <dbReference type="Rhea" id="RHEA:17989"/>
        <dbReference type="Rhea" id="RHEA-COMP:9863"/>
        <dbReference type="Rhea" id="RHEA-COMP:11604"/>
        <dbReference type="ChEBI" id="CHEBI:15378"/>
        <dbReference type="ChEBI" id="CHEBI:29999"/>
        <dbReference type="ChEBI" id="CHEBI:30616"/>
        <dbReference type="ChEBI" id="CHEBI:83421"/>
        <dbReference type="ChEBI" id="CHEBI:456216"/>
        <dbReference type="EC" id="2.7.11.1"/>
    </reaction>
</comment>
<comment type="catalytic activity">
    <reaction>
        <text>L-threonyl-[protein] + ATP = O-phospho-L-threonyl-[protein] + ADP + H(+)</text>
        <dbReference type="Rhea" id="RHEA:46608"/>
        <dbReference type="Rhea" id="RHEA-COMP:11060"/>
        <dbReference type="Rhea" id="RHEA-COMP:11605"/>
        <dbReference type="ChEBI" id="CHEBI:15378"/>
        <dbReference type="ChEBI" id="CHEBI:30013"/>
        <dbReference type="ChEBI" id="CHEBI:30616"/>
        <dbReference type="ChEBI" id="CHEBI:61977"/>
        <dbReference type="ChEBI" id="CHEBI:456216"/>
        <dbReference type="EC" id="2.7.11.1"/>
    </reaction>
</comment>
<comment type="activity regulation">
    <text evidence="8">Activated when autophosphorylated at Thr-153 and inactivated when phosphorylated at Ser-260 by SnRK1.1/KIN10.</text>
</comment>
<comment type="subunit">
    <text evidence="1 5">Associates with the SNF1-related protein kinase (SnRK) complex (By similarity). Interacts with AL1, a geminivirus (TGMV) protein essential for viral replication.</text>
</comment>
<comment type="interaction">
    <interactant intactId="EBI-6399237">
        <id>Q5HZ38</id>
    </interactant>
    <interactant intactId="EBI-20798606">
        <id>Q38997-2</id>
        <label>KIN10</label>
    </interactant>
    <organismsDiffer>false</organismsDiffer>
    <experiments>2</experiments>
</comment>
<comment type="tissue specificity">
    <text evidence="5">Expressed in shoot apical meristem, leaf primordium and emerging petiole (at protein level).</text>
</comment>
<comment type="developmental stage">
    <text evidence="5">Highly expressed in young leaf and floral tissues but not expressed in mature tissues (at protein level).</text>
</comment>
<comment type="induction">
    <text evidence="5">By geminivirus (CaLCuV or BCTV) infection (at the protein level).</text>
</comment>
<comment type="miscellaneous">
    <text>Functionally able to complement the yeast elm1 sak1 tos3 triple mutant.</text>
</comment>
<comment type="similarity">
    <text evidence="2">Belongs to the protein kinase superfamily. Ser/Thr protein kinase family.</text>
</comment>
<comment type="sequence caution" evidence="9">
    <conflict type="erroneous gene model prediction">
        <sequence resource="EMBL-CDS" id="BAB08238"/>
    </conflict>
</comment>
<evidence type="ECO:0000250" key="1"/>
<evidence type="ECO:0000255" key="2">
    <source>
        <dbReference type="PROSITE-ProRule" id="PRU00159"/>
    </source>
</evidence>
<evidence type="ECO:0000255" key="3">
    <source>
        <dbReference type="PROSITE-ProRule" id="PRU10027"/>
    </source>
</evidence>
<evidence type="ECO:0000256" key="4">
    <source>
        <dbReference type="SAM" id="MobiDB-lite"/>
    </source>
</evidence>
<evidence type="ECO:0000269" key="5">
    <source>
    </source>
</evidence>
<evidence type="ECO:0000269" key="6">
    <source>
    </source>
</evidence>
<evidence type="ECO:0000269" key="7">
    <source>
    </source>
</evidence>
<evidence type="ECO:0000269" key="8">
    <source>
    </source>
</evidence>
<evidence type="ECO:0000305" key="9"/>
<evidence type="ECO:0000305" key="10">
    <source>
    </source>
</evidence>
<keyword id="KW-0067">ATP-binding</keyword>
<keyword id="KW-0945">Host-virus interaction</keyword>
<keyword id="KW-0418">Kinase</keyword>
<keyword id="KW-0547">Nucleotide-binding</keyword>
<keyword id="KW-0597">Phosphoprotein</keyword>
<keyword id="KW-1185">Reference proteome</keyword>
<keyword id="KW-0723">Serine/threonine-protein kinase</keyword>
<keyword id="KW-0808">Transferase</keyword>
<protein>
    <recommendedName>
        <fullName>Serine/threonine-protein kinase GRIK2</fullName>
        <ecNumber>2.7.11.1</ecNumber>
    </recommendedName>
    <alternativeName>
        <fullName>Protein GEMINIVIRUS REP INTERACTING KINASE 2</fullName>
        <shortName>Protein GRIK2</shortName>
    </alternativeName>
    <alternativeName>
        <fullName>SnRK1-activating protein kinase 1</fullName>
        <shortName>AtSnAK1</shortName>
    </alternativeName>
</protein>
<feature type="chain" id="PRO_0000421035" description="Serine/threonine-protein kinase GRIK2">
    <location>
        <begin position="1"/>
        <end position="407"/>
    </location>
</feature>
<feature type="domain" description="Protein kinase" evidence="2">
    <location>
        <begin position="107"/>
        <end position="370"/>
    </location>
</feature>
<feature type="region of interest" description="Disordered" evidence="4">
    <location>
        <begin position="21"/>
        <end position="64"/>
    </location>
</feature>
<feature type="compositionally biased region" description="Basic and acidic residues" evidence="4">
    <location>
        <begin position="31"/>
        <end position="40"/>
    </location>
</feature>
<feature type="active site" description="Proton acceptor" evidence="2 3">
    <location>
        <position position="238"/>
    </location>
</feature>
<feature type="binding site" evidence="2">
    <location>
        <begin position="113"/>
        <end position="121"/>
    </location>
    <ligand>
        <name>ATP</name>
        <dbReference type="ChEBI" id="CHEBI:30616"/>
    </ligand>
</feature>
<feature type="binding site" evidence="9">
    <location>
        <position position="136"/>
    </location>
    <ligand>
        <name>ATP</name>
        <dbReference type="ChEBI" id="CHEBI:30616"/>
    </ligand>
</feature>
<feature type="modified residue" description="Phosphothreonine; by autocatalysis" evidence="10">
    <location>
        <position position="153"/>
    </location>
</feature>
<feature type="modified residue" description="Phosphoserine; by KIN10" evidence="8">
    <location>
        <position position="260"/>
    </location>
</feature>
<feature type="mutagenesis site" description="Abolishes autophosphorylation." evidence="7">
    <original>K</original>
    <variation>A</variation>
    <location>
        <position position="136"/>
    </location>
</feature>
<feature type="mutagenesis site" description="Abolishes activity." evidence="8">
    <original>T</original>
    <variation>A</variation>
    <location>
        <position position="153"/>
    </location>
</feature>
<feature type="mutagenesis site" description="Abolishes activity." evidence="8">
    <original>S</original>
    <variation>D</variation>
    <location>
        <position position="260"/>
    </location>
</feature>
<feature type="sequence conflict" description="In Ref. 4; AAM20697." evidence="9" ref="4">
    <original>N</original>
    <variation>I</variation>
    <location>
        <position position="243"/>
    </location>
</feature>
<name>GRIK2_ARATH</name>
<organism>
    <name type="scientific">Arabidopsis thaliana</name>
    <name type="common">Mouse-ear cress</name>
    <dbReference type="NCBI Taxonomy" id="3702"/>
    <lineage>
        <taxon>Eukaryota</taxon>
        <taxon>Viridiplantae</taxon>
        <taxon>Streptophyta</taxon>
        <taxon>Embryophyta</taxon>
        <taxon>Tracheophyta</taxon>
        <taxon>Spermatophyta</taxon>
        <taxon>Magnoliopsida</taxon>
        <taxon>eudicotyledons</taxon>
        <taxon>Gunneridae</taxon>
        <taxon>Pentapetalae</taxon>
        <taxon>rosids</taxon>
        <taxon>malvids</taxon>
        <taxon>Brassicales</taxon>
        <taxon>Brassicaceae</taxon>
        <taxon>Camelineae</taxon>
        <taxon>Arabidopsis</taxon>
    </lineage>
</organism>
<sequence length="407" mass="45652">MFRDSFLFARTIGCFGCFGSSGSRNQQSPKPYDDDTHSCDSDVTSTARGEEEEDEEEVEQKSRSKRSEEILKYRLDNGLICRHIPVRETNELIRGEDENGDKTINEYVRVCKIGSGSYGKVVLYRSTLDGQYYAIKAFHKSHLLRLRVAPSETAMSDVLREVMIMKILEHPNIVNLIEVIDDPETDHFYMVLEYVDGKWVYDGSGPPGALGEKTARKYLRDIVTGLMYLHAHDVIHGDIKPDNLLVTSSGTVKIGDFSVSQVFKDDDDQLRRSPGTPVFTAPECCLVSGITYSGRAADTWAVGVTLYCMILGQYPFLADTLQDTYDKIVNNPLIIPDGLNPLLRDLIEGLLCKDPSQRMTLKNVSEHPWVIGEDGHVPEYFCWCKRNAASKIEEGEANGISETSDPN</sequence>
<dbReference type="EC" id="2.7.11.1"/>
<dbReference type="EMBL" id="AM489730">
    <property type="protein sequence ID" value="CAM32014.1"/>
    <property type="molecule type" value="mRNA"/>
</dbReference>
<dbReference type="EMBL" id="AB011483">
    <property type="protein sequence ID" value="BAB08238.1"/>
    <property type="status" value="ALT_SEQ"/>
    <property type="molecule type" value="Genomic_DNA"/>
</dbReference>
<dbReference type="EMBL" id="CP002688">
    <property type="protein sequence ID" value="AED97343.1"/>
    <property type="molecule type" value="Genomic_DNA"/>
</dbReference>
<dbReference type="EMBL" id="AY099846">
    <property type="protein sequence ID" value="AAM20697.1"/>
    <property type="molecule type" value="mRNA"/>
</dbReference>
<dbReference type="EMBL" id="BT020486">
    <property type="protein sequence ID" value="AAW38987.1"/>
    <property type="molecule type" value="mRNA"/>
</dbReference>
<dbReference type="EMBL" id="BT025976">
    <property type="protein sequence ID" value="ABG25065.1"/>
    <property type="molecule type" value="mRNA"/>
</dbReference>
<dbReference type="RefSeq" id="NP_200863.2">
    <property type="nucleotide sequence ID" value="NM_125448.4"/>
</dbReference>
<dbReference type="SMR" id="Q5HZ38"/>
<dbReference type="BioGRID" id="21420">
    <property type="interactions" value="2"/>
</dbReference>
<dbReference type="FunCoup" id="Q5HZ38">
    <property type="interactions" value="1362"/>
</dbReference>
<dbReference type="IntAct" id="Q5HZ38">
    <property type="interactions" value="3"/>
</dbReference>
<dbReference type="STRING" id="3702.Q5HZ38"/>
<dbReference type="iPTMnet" id="Q5HZ38"/>
<dbReference type="PaxDb" id="3702-AT5G60550.1"/>
<dbReference type="ProteomicsDB" id="247293"/>
<dbReference type="EnsemblPlants" id="AT5G60550.1">
    <property type="protein sequence ID" value="AT5G60550.1"/>
    <property type="gene ID" value="AT5G60550"/>
</dbReference>
<dbReference type="GeneID" id="836176"/>
<dbReference type="Gramene" id="AT5G60550.1">
    <property type="protein sequence ID" value="AT5G60550.1"/>
    <property type="gene ID" value="AT5G60550"/>
</dbReference>
<dbReference type="KEGG" id="ath:AT5G60550"/>
<dbReference type="Araport" id="AT5G60550"/>
<dbReference type="TAIR" id="AT5G60550">
    <property type="gene designation" value="GRIK2"/>
</dbReference>
<dbReference type="eggNOG" id="KOG0585">
    <property type="taxonomic scope" value="Eukaryota"/>
</dbReference>
<dbReference type="HOGENOM" id="CLU_000288_63_0_1"/>
<dbReference type="InParanoid" id="Q5HZ38"/>
<dbReference type="OMA" id="AENGMVC"/>
<dbReference type="OrthoDB" id="68483at2759"/>
<dbReference type="PhylomeDB" id="Q5HZ38"/>
<dbReference type="PRO" id="PR:Q5HZ38"/>
<dbReference type="Proteomes" id="UP000006548">
    <property type="component" value="Chromosome 5"/>
</dbReference>
<dbReference type="ExpressionAtlas" id="Q5HZ38">
    <property type="expression patterns" value="baseline and differential"/>
</dbReference>
<dbReference type="GO" id="GO:0005524">
    <property type="term" value="F:ATP binding"/>
    <property type="evidence" value="ECO:0007669"/>
    <property type="project" value="UniProtKB-KW"/>
</dbReference>
<dbReference type="GO" id="GO:0016301">
    <property type="term" value="F:kinase activity"/>
    <property type="evidence" value="ECO:0000314"/>
    <property type="project" value="TAIR"/>
</dbReference>
<dbReference type="GO" id="GO:0004672">
    <property type="term" value="F:protein kinase activity"/>
    <property type="evidence" value="ECO:0000314"/>
    <property type="project" value="UniProtKB"/>
</dbReference>
<dbReference type="GO" id="GO:0106310">
    <property type="term" value="F:protein serine kinase activity"/>
    <property type="evidence" value="ECO:0007669"/>
    <property type="project" value="RHEA"/>
</dbReference>
<dbReference type="GO" id="GO:0004674">
    <property type="term" value="F:protein serine/threonine kinase activity"/>
    <property type="evidence" value="ECO:0007669"/>
    <property type="project" value="UniProtKB-KW"/>
</dbReference>
<dbReference type="GO" id="GO:0006468">
    <property type="term" value="P:protein phosphorylation"/>
    <property type="evidence" value="ECO:0000314"/>
    <property type="project" value="TAIR"/>
</dbReference>
<dbReference type="GO" id="GO:0009615">
    <property type="term" value="P:response to virus"/>
    <property type="evidence" value="ECO:0000270"/>
    <property type="project" value="UniProtKB"/>
</dbReference>
<dbReference type="CDD" id="cd14008">
    <property type="entry name" value="STKc_LKB1_CaMKK"/>
    <property type="match status" value="1"/>
</dbReference>
<dbReference type="FunFam" id="1.10.510.10:FF:000747">
    <property type="entry name" value="Serine/threonine-protein kinase GRIK2"/>
    <property type="match status" value="1"/>
</dbReference>
<dbReference type="FunFam" id="3.30.200.20:FF:000206">
    <property type="entry name" value="Serine/threonine-protein kinase Ssp1"/>
    <property type="match status" value="1"/>
</dbReference>
<dbReference type="Gene3D" id="1.10.510.10">
    <property type="entry name" value="Transferase(Phosphotransferase) domain 1"/>
    <property type="match status" value="1"/>
</dbReference>
<dbReference type="InterPro" id="IPR011009">
    <property type="entry name" value="Kinase-like_dom_sf"/>
</dbReference>
<dbReference type="InterPro" id="IPR000719">
    <property type="entry name" value="Prot_kinase_dom"/>
</dbReference>
<dbReference type="InterPro" id="IPR017441">
    <property type="entry name" value="Protein_kinase_ATP_BS"/>
</dbReference>
<dbReference type="InterPro" id="IPR008271">
    <property type="entry name" value="Ser/Thr_kinase_AS"/>
</dbReference>
<dbReference type="PANTHER" id="PTHR24346">
    <property type="entry name" value="MAP/MICROTUBULE AFFINITY-REGULATING KINASE"/>
    <property type="match status" value="1"/>
</dbReference>
<dbReference type="PANTHER" id="PTHR24346:SF39">
    <property type="entry name" value="SERINE_THREONINE-PROTEIN KINASE GRIK1-RELATED"/>
    <property type="match status" value="1"/>
</dbReference>
<dbReference type="Pfam" id="PF00069">
    <property type="entry name" value="Pkinase"/>
    <property type="match status" value="1"/>
</dbReference>
<dbReference type="SMART" id="SM00220">
    <property type="entry name" value="S_TKc"/>
    <property type="match status" value="1"/>
</dbReference>
<dbReference type="SUPFAM" id="SSF56112">
    <property type="entry name" value="Protein kinase-like (PK-like)"/>
    <property type="match status" value="1"/>
</dbReference>
<dbReference type="PROSITE" id="PS00107">
    <property type="entry name" value="PROTEIN_KINASE_ATP"/>
    <property type="match status" value="1"/>
</dbReference>
<dbReference type="PROSITE" id="PS50011">
    <property type="entry name" value="PROTEIN_KINASE_DOM"/>
    <property type="match status" value="1"/>
</dbReference>
<dbReference type="PROSITE" id="PS00108">
    <property type="entry name" value="PROTEIN_KINASE_ST"/>
    <property type="match status" value="1"/>
</dbReference>
<gene>
    <name type="primary">GRIK2</name>
    <name type="synonym">SNAK1</name>
    <name type="ordered locus">At5g60550</name>
    <name type="ORF">MUF9.18</name>
</gene>
<proteinExistence type="evidence at protein level"/>
<reference key="1">
    <citation type="journal article" date="2007" name="J. Biol. Chem.">
        <title>DNA sequences from Arabidopsis, which encode protein kinases and function as upstream regulators of Snf1 in yeast.</title>
        <authorList>
            <person name="Hey S.J."/>
            <person name="Mayerhofer H."/>
            <person name="Halford N.G."/>
            <person name="Dickinson J.R."/>
        </authorList>
    </citation>
    <scope>NUCLEOTIDE SEQUENCE [MRNA]</scope>
    <scope>FUNCTION</scope>
    <source>
        <tissue>Seedling</tissue>
    </source>
</reference>
<reference key="2">
    <citation type="journal article" date="1998" name="DNA Res.">
        <title>Structural analysis of Arabidopsis thaliana chromosome 5. V. Sequence features of the regions of 1,381,565 bp covered by twenty one physically assigned P1 and TAC clones.</title>
        <authorList>
            <person name="Kaneko T."/>
            <person name="Kotani H."/>
            <person name="Nakamura Y."/>
            <person name="Sato S."/>
            <person name="Asamizu E."/>
            <person name="Miyajima N."/>
            <person name="Tabata S."/>
        </authorList>
    </citation>
    <scope>NUCLEOTIDE SEQUENCE [LARGE SCALE GENOMIC DNA]</scope>
    <source>
        <strain>cv. Columbia</strain>
    </source>
</reference>
<reference key="3">
    <citation type="journal article" date="2017" name="Plant J.">
        <title>Araport11: a complete reannotation of the Arabidopsis thaliana reference genome.</title>
        <authorList>
            <person name="Cheng C.Y."/>
            <person name="Krishnakumar V."/>
            <person name="Chan A.P."/>
            <person name="Thibaud-Nissen F."/>
            <person name="Schobel S."/>
            <person name="Town C.D."/>
        </authorList>
    </citation>
    <scope>GENOME REANNOTATION</scope>
    <source>
        <strain>cv. Columbia</strain>
    </source>
</reference>
<reference key="4">
    <citation type="journal article" date="2003" name="Science">
        <title>Empirical analysis of transcriptional activity in the Arabidopsis genome.</title>
        <authorList>
            <person name="Yamada K."/>
            <person name="Lim J."/>
            <person name="Dale J.M."/>
            <person name="Chen H."/>
            <person name="Shinn P."/>
            <person name="Palm C.J."/>
            <person name="Southwick A.M."/>
            <person name="Wu H.C."/>
            <person name="Kim C.J."/>
            <person name="Nguyen M."/>
            <person name="Pham P.K."/>
            <person name="Cheuk R.F."/>
            <person name="Karlin-Newmann G."/>
            <person name="Liu S.X."/>
            <person name="Lam B."/>
            <person name="Sakano H."/>
            <person name="Wu T."/>
            <person name="Yu G."/>
            <person name="Miranda M."/>
            <person name="Quach H.L."/>
            <person name="Tripp M."/>
            <person name="Chang C.H."/>
            <person name="Lee J.M."/>
            <person name="Toriumi M.J."/>
            <person name="Chan M.M."/>
            <person name="Tang C.C."/>
            <person name="Onodera C.S."/>
            <person name="Deng J.M."/>
            <person name="Akiyama K."/>
            <person name="Ansari Y."/>
            <person name="Arakawa T."/>
            <person name="Banh J."/>
            <person name="Banno F."/>
            <person name="Bowser L."/>
            <person name="Brooks S.Y."/>
            <person name="Carninci P."/>
            <person name="Chao Q."/>
            <person name="Choy N."/>
            <person name="Enju A."/>
            <person name="Goldsmith A.D."/>
            <person name="Gurjal M."/>
            <person name="Hansen N.F."/>
            <person name="Hayashizaki Y."/>
            <person name="Johnson-Hopson C."/>
            <person name="Hsuan V.W."/>
            <person name="Iida K."/>
            <person name="Karnes M."/>
            <person name="Khan S."/>
            <person name="Koesema E."/>
            <person name="Ishida J."/>
            <person name="Jiang P.X."/>
            <person name="Jones T."/>
            <person name="Kawai J."/>
            <person name="Kamiya A."/>
            <person name="Meyers C."/>
            <person name="Nakajima M."/>
            <person name="Narusaka M."/>
            <person name="Seki M."/>
            <person name="Sakurai T."/>
            <person name="Satou M."/>
            <person name="Tamse R."/>
            <person name="Vaysberg M."/>
            <person name="Wallender E.K."/>
            <person name="Wong C."/>
            <person name="Yamamura Y."/>
            <person name="Yuan S."/>
            <person name="Shinozaki K."/>
            <person name="Davis R.W."/>
            <person name="Theologis A."/>
            <person name="Ecker J.R."/>
        </authorList>
    </citation>
    <scope>NUCLEOTIDE SEQUENCE [LARGE SCALE MRNA]</scope>
    <source>
        <strain>cv. Columbia</strain>
    </source>
</reference>
<reference key="5">
    <citation type="submission" date="2005-01" db="EMBL/GenBank/DDBJ databases">
        <title>Arabidopsis ORF clones.</title>
        <authorList>
            <person name="Kim C.J."/>
            <person name="Chen H."/>
            <person name="Cheuk R.F."/>
            <person name="Shinn P."/>
            <person name="Ecker J.R."/>
        </authorList>
    </citation>
    <scope>NUCLEOTIDE SEQUENCE [LARGE SCALE MRNA]</scope>
    <source>
        <strain>cv. Columbia</strain>
    </source>
</reference>
<reference key="6">
    <citation type="submission" date="2006-06" db="EMBL/GenBank/DDBJ databases">
        <title>Arabidopsis ORF clones.</title>
        <authorList>
            <person name="Shinn P."/>
            <person name="Chen H."/>
            <person name="Kim C.J."/>
            <person name="Quinitio C."/>
            <person name="Ecker J.R."/>
        </authorList>
    </citation>
    <scope>NUCLEOTIDE SEQUENCE [LARGE SCALE MRNA]</scope>
    <source>
        <strain>cv. Columbia</strain>
    </source>
</reference>
<reference key="7">
    <citation type="journal article" date="2006" name="Plant Physiol.">
        <title>Geminivirus infection up-regulates the expression of two Arabidopsis protein kinases related to yeast SNF1- and mammalian AMPK-activating kinases.</title>
        <authorList>
            <person name="Shen W."/>
            <person name="Hanley-Bowdoin L."/>
        </authorList>
    </citation>
    <scope>FUNCTION</scope>
    <scope>INTERACTION WITH GEMINIVIRUS AL1</scope>
    <scope>INDUCTION</scope>
    <scope>DEVELOPMENTAL STAGE</scope>
    <scope>TISSUE SPECIFICITY</scope>
</reference>
<reference key="8">
    <citation type="journal article" date="2009" name="Plant Physiol.">
        <title>Arabidopsis protein kinases GRIK1 and GRIK2 specifically activate SnRK1 by phosphorylating its activation loop.</title>
        <authorList>
            <person name="Shen W."/>
            <person name="Reyes M.I."/>
            <person name="Hanley-Bowdoin L."/>
        </authorList>
    </citation>
    <scope>FUNCTION</scope>
    <scope>AUTOPHOSPHORYLATION</scope>
    <scope>MUTAGENESIS OF LYS-136</scope>
</reference>
<reference key="9">
    <citation type="journal article" date="2010" name="J. Biol. Chem.">
        <title>Cross-phosphorylation between Arabidopsis thaliana sucrose nonfermenting 1-related protein kinase 1 (AtSnRK1) and its activating kinase (AtSnAK) determines their catalytic activities.</title>
        <authorList>
            <person name="Crozet P."/>
            <person name="Jammes F."/>
            <person name="Valot B."/>
            <person name="Ambard-Bretteville F."/>
            <person name="Nessler S."/>
            <person name="Hodges M."/>
            <person name="Vidal J."/>
            <person name="Thomas M."/>
        </authorList>
    </citation>
    <scope>FUNCTION</scope>
    <scope>PHOSPHORYLATION AT THR-153 AND SER-260</scope>
    <scope>MUTAGENESIS OF THR-153 AND SER-260</scope>
    <scope>ACTIVITY REGULATION</scope>
</reference>